<dbReference type="EC" id="7.1.1.9"/>
<dbReference type="EMBL" id="AJ235271">
    <property type="protein sequence ID" value="CAA14863.1"/>
    <property type="molecule type" value="Genomic_DNA"/>
</dbReference>
<dbReference type="PIR" id="E71698">
    <property type="entry name" value="E71698"/>
</dbReference>
<dbReference type="RefSeq" id="NP_220787.1">
    <property type="nucleotide sequence ID" value="NC_000963.1"/>
</dbReference>
<dbReference type="RefSeq" id="WP_010886286.1">
    <property type="nucleotide sequence ID" value="NC_000963.1"/>
</dbReference>
<dbReference type="SMR" id="Q9ZDC6"/>
<dbReference type="STRING" id="272947.gene:17555486"/>
<dbReference type="EnsemblBacteria" id="CAA14863">
    <property type="protein sequence ID" value="CAA14863"/>
    <property type="gene ID" value="CAA14863"/>
</dbReference>
<dbReference type="GeneID" id="57569531"/>
<dbReference type="KEGG" id="rpr:RP406"/>
<dbReference type="PATRIC" id="fig|272947.5.peg.419"/>
<dbReference type="eggNOG" id="COG1622">
    <property type="taxonomic scope" value="Bacteria"/>
</dbReference>
<dbReference type="HOGENOM" id="CLU_036876_2_0_5"/>
<dbReference type="OrthoDB" id="9781261at2"/>
<dbReference type="Proteomes" id="UP000002480">
    <property type="component" value="Chromosome"/>
</dbReference>
<dbReference type="GO" id="GO:0005886">
    <property type="term" value="C:plasma membrane"/>
    <property type="evidence" value="ECO:0007669"/>
    <property type="project" value="UniProtKB-SubCell"/>
</dbReference>
<dbReference type="GO" id="GO:0005507">
    <property type="term" value="F:copper ion binding"/>
    <property type="evidence" value="ECO:0007669"/>
    <property type="project" value="InterPro"/>
</dbReference>
<dbReference type="GO" id="GO:0004129">
    <property type="term" value="F:cytochrome-c oxidase activity"/>
    <property type="evidence" value="ECO:0007669"/>
    <property type="project" value="UniProtKB-EC"/>
</dbReference>
<dbReference type="GO" id="GO:0042773">
    <property type="term" value="P:ATP synthesis coupled electron transport"/>
    <property type="evidence" value="ECO:0007669"/>
    <property type="project" value="TreeGrafter"/>
</dbReference>
<dbReference type="CDD" id="cd13912">
    <property type="entry name" value="CcO_II_C"/>
    <property type="match status" value="1"/>
</dbReference>
<dbReference type="FunFam" id="2.60.40.420:FF:000001">
    <property type="entry name" value="Cytochrome c oxidase subunit 2"/>
    <property type="match status" value="1"/>
</dbReference>
<dbReference type="Gene3D" id="1.10.287.90">
    <property type="match status" value="1"/>
</dbReference>
<dbReference type="Gene3D" id="2.60.40.420">
    <property type="entry name" value="Cupredoxins - blue copper proteins"/>
    <property type="match status" value="1"/>
</dbReference>
<dbReference type="InterPro" id="IPR045187">
    <property type="entry name" value="CcO_II"/>
</dbReference>
<dbReference type="InterPro" id="IPR002429">
    <property type="entry name" value="CcO_II-like_C"/>
</dbReference>
<dbReference type="InterPro" id="IPR034210">
    <property type="entry name" value="CcO_II_C"/>
</dbReference>
<dbReference type="InterPro" id="IPR001505">
    <property type="entry name" value="Copper_CuA"/>
</dbReference>
<dbReference type="InterPro" id="IPR008972">
    <property type="entry name" value="Cupredoxin"/>
</dbReference>
<dbReference type="InterPro" id="IPR014222">
    <property type="entry name" value="Cyt_c_oxidase_su2"/>
</dbReference>
<dbReference type="InterPro" id="IPR011759">
    <property type="entry name" value="Cyt_c_oxidase_su2_TM_dom"/>
</dbReference>
<dbReference type="InterPro" id="IPR036257">
    <property type="entry name" value="Cyt_c_oxidase_su2_TM_sf"/>
</dbReference>
<dbReference type="InterPro" id="IPR005728">
    <property type="entry name" value="RPE1"/>
</dbReference>
<dbReference type="NCBIfam" id="TIGR02866">
    <property type="entry name" value="CoxB"/>
    <property type="match status" value="1"/>
</dbReference>
<dbReference type="NCBIfam" id="TIGR01045">
    <property type="entry name" value="RPE1"/>
    <property type="match status" value="1"/>
</dbReference>
<dbReference type="PANTHER" id="PTHR22888:SF9">
    <property type="entry name" value="CYTOCHROME C OXIDASE SUBUNIT 2"/>
    <property type="match status" value="1"/>
</dbReference>
<dbReference type="PANTHER" id="PTHR22888">
    <property type="entry name" value="CYTOCHROME C OXIDASE, SUBUNIT II"/>
    <property type="match status" value="1"/>
</dbReference>
<dbReference type="Pfam" id="PF00116">
    <property type="entry name" value="COX2"/>
    <property type="match status" value="1"/>
</dbReference>
<dbReference type="Pfam" id="PF02790">
    <property type="entry name" value="COX2_TM"/>
    <property type="match status" value="1"/>
</dbReference>
<dbReference type="PRINTS" id="PR01166">
    <property type="entry name" value="CYCOXIDASEII"/>
</dbReference>
<dbReference type="SUPFAM" id="SSF49503">
    <property type="entry name" value="Cupredoxins"/>
    <property type="match status" value="1"/>
</dbReference>
<dbReference type="SUPFAM" id="SSF81464">
    <property type="entry name" value="Cytochrome c oxidase subunit II-like, transmembrane region"/>
    <property type="match status" value="1"/>
</dbReference>
<dbReference type="PROSITE" id="PS00078">
    <property type="entry name" value="COX2"/>
    <property type="match status" value="1"/>
</dbReference>
<dbReference type="PROSITE" id="PS50857">
    <property type="entry name" value="COX2_CUA"/>
    <property type="match status" value="1"/>
</dbReference>
<dbReference type="PROSITE" id="PS50999">
    <property type="entry name" value="COX2_TM"/>
    <property type="match status" value="1"/>
</dbReference>
<accession>Q9ZDC6</accession>
<keyword id="KW-1003">Cell membrane</keyword>
<keyword id="KW-0186">Copper</keyword>
<keyword id="KW-0249">Electron transport</keyword>
<keyword id="KW-0349">Heme</keyword>
<keyword id="KW-0408">Iron</keyword>
<keyword id="KW-0472">Membrane</keyword>
<keyword id="KW-0479">Metal-binding</keyword>
<keyword id="KW-1185">Reference proteome</keyword>
<keyword id="KW-0679">Respiratory chain</keyword>
<keyword id="KW-1278">Translocase</keyword>
<keyword id="KW-0812">Transmembrane</keyword>
<keyword id="KW-1133">Transmembrane helix</keyword>
<keyword id="KW-0813">Transport</keyword>
<sequence>MNIIRYWSKQSYKKLKVDQEHNTTEYTNVCNSTSLGSTYTLPLKMELWKIYITLIYFLITNSNCFASEPLAWQITFQPPASPIMEELYHFHNFLLYIGTAIVLFVAGLLGFVCIRFNAKNNPVPAKFAHNLLIEIIWTVIPIIILVIIAVPSFRILRHAEKIPEIDLTIKVVGYQWYWHYIYPDYDNLEFDSVMISDKNLQIGQKRLLDVDNRIVIPENTTVRFLITAGDVIHSFAVPSLGFKIDAVPGRINETWTRVTKKGVYYGQCSELCGINHGFMPIAIEVVSKEDFNNWIALKNKTAMNNKSSKLMSK</sequence>
<evidence type="ECO:0000250" key="1"/>
<evidence type="ECO:0000255" key="2"/>
<evidence type="ECO:0000305" key="3"/>
<comment type="function">
    <text evidence="1">Subunits I and II form the functional core of the enzyme complex. Electrons originating in cytochrome c are transferred via heme a and Cu(A) to the binuclear center formed by heme a3 and Cu(B) (By similarity).</text>
</comment>
<comment type="catalytic activity">
    <reaction>
        <text>4 Fe(II)-[cytochrome c] + O2 + 8 H(+)(in) = 4 Fe(III)-[cytochrome c] + 2 H2O + 4 H(+)(out)</text>
        <dbReference type="Rhea" id="RHEA:11436"/>
        <dbReference type="Rhea" id="RHEA-COMP:10350"/>
        <dbReference type="Rhea" id="RHEA-COMP:14399"/>
        <dbReference type="ChEBI" id="CHEBI:15377"/>
        <dbReference type="ChEBI" id="CHEBI:15378"/>
        <dbReference type="ChEBI" id="CHEBI:15379"/>
        <dbReference type="ChEBI" id="CHEBI:29033"/>
        <dbReference type="ChEBI" id="CHEBI:29034"/>
        <dbReference type="EC" id="7.1.1.9"/>
    </reaction>
</comment>
<comment type="cofactor">
    <cofactor evidence="1">
        <name>Cu cation</name>
        <dbReference type="ChEBI" id="CHEBI:23378"/>
    </cofactor>
    <text evidence="1">Binds a copper A center.</text>
</comment>
<comment type="cofactor">
    <cofactor evidence="1">
        <name>heme</name>
        <dbReference type="ChEBI" id="CHEBI:30413"/>
    </cofactor>
</comment>
<comment type="subcellular location">
    <subcellularLocation>
        <location evidence="3">Cell membrane</location>
        <topology evidence="3">Multi-pass membrane protein</topology>
    </subcellularLocation>
</comment>
<comment type="similarity">
    <text evidence="3">Belongs to the cytochrome c oxidase subunit 2 family.</text>
</comment>
<gene>
    <name type="primary">ctaC</name>
    <name type="synonym">coxB</name>
    <name type="ordered locus">RP406</name>
</gene>
<feature type="chain" id="PRO_0000183720" description="Probable cytochrome c oxidase subunit 2">
    <location>
        <begin position="1"/>
        <end position="313"/>
    </location>
</feature>
<feature type="transmembrane region" description="Helical" evidence="2">
    <location>
        <begin position="39"/>
        <end position="59"/>
    </location>
</feature>
<feature type="transmembrane region" description="Helical" evidence="2">
    <location>
        <begin position="94"/>
        <end position="114"/>
    </location>
</feature>
<feature type="transmembrane region" description="Helical" evidence="2">
    <location>
        <begin position="131"/>
        <end position="151"/>
    </location>
</feature>
<feature type="domain" description="RPE1 insert">
    <location>
        <begin position="5"/>
        <end position="51"/>
    </location>
</feature>
<feature type="binding site" evidence="2">
    <location>
        <position position="233"/>
    </location>
    <ligand>
        <name>Cu cation</name>
        <dbReference type="ChEBI" id="CHEBI:23378"/>
        <label>A</label>
    </ligand>
</feature>
<feature type="binding site" evidence="2">
    <location>
        <position position="268"/>
    </location>
    <ligand>
        <name>Cu cation</name>
        <dbReference type="ChEBI" id="CHEBI:23378"/>
        <label>A</label>
    </ligand>
</feature>
<feature type="binding site" evidence="2">
    <location>
        <position position="272"/>
    </location>
    <ligand>
        <name>Cu cation</name>
        <dbReference type="ChEBI" id="CHEBI:23378"/>
        <label>A</label>
    </ligand>
</feature>
<feature type="binding site" evidence="2">
    <location>
        <position position="276"/>
    </location>
    <ligand>
        <name>Cu cation</name>
        <dbReference type="ChEBI" id="CHEBI:23378"/>
        <label>A</label>
    </ligand>
</feature>
<organism>
    <name type="scientific">Rickettsia prowazekii (strain Madrid E)</name>
    <dbReference type="NCBI Taxonomy" id="272947"/>
    <lineage>
        <taxon>Bacteria</taxon>
        <taxon>Pseudomonadati</taxon>
        <taxon>Pseudomonadota</taxon>
        <taxon>Alphaproteobacteria</taxon>
        <taxon>Rickettsiales</taxon>
        <taxon>Rickettsiaceae</taxon>
        <taxon>Rickettsieae</taxon>
        <taxon>Rickettsia</taxon>
        <taxon>typhus group</taxon>
    </lineage>
</organism>
<proteinExistence type="inferred from homology"/>
<name>COX2_RICPR</name>
<reference key="1">
    <citation type="journal article" date="1998" name="Nature">
        <title>The genome sequence of Rickettsia prowazekii and the origin of mitochondria.</title>
        <authorList>
            <person name="Andersson S.G.E."/>
            <person name="Zomorodipour A."/>
            <person name="Andersson J.O."/>
            <person name="Sicheritz-Ponten T."/>
            <person name="Alsmark U.C.M."/>
            <person name="Podowski R.M."/>
            <person name="Naeslund A.K."/>
            <person name="Eriksson A.-S."/>
            <person name="Winkler H.H."/>
            <person name="Kurland C.G."/>
        </authorList>
    </citation>
    <scope>NUCLEOTIDE SEQUENCE [LARGE SCALE GENOMIC DNA]</scope>
    <source>
        <strain>Madrid E</strain>
    </source>
</reference>
<reference key="2">
    <citation type="journal article" date="2000" name="Science">
        <title>Selfish DNA in protein-coding genes of Rickettsia.</title>
        <authorList>
            <person name="Ogata H."/>
            <person name="Audic S."/>
            <person name="Barbe V."/>
            <person name="Artiguenave F."/>
            <person name="Fournier P.-E."/>
            <person name="Raoult D."/>
            <person name="Claverie J.-M."/>
        </authorList>
    </citation>
    <scope>DOMAIN RPE1</scope>
</reference>
<protein>
    <recommendedName>
        <fullName>Probable cytochrome c oxidase subunit 2</fullName>
        <ecNumber>7.1.1.9</ecNumber>
    </recommendedName>
    <alternativeName>
        <fullName>Cytochrome aa3 subunit 2</fullName>
    </alternativeName>
    <alternativeName>
        <fullName>Cytochrome c oxidase polypeptide II</fullName>
    </alternativeName>
</protein>